<gene>
    <name type="ordered locus">MIMI_R831</name>
</gene>
<sequence length="1624" mass="182517">MHSVYTKYTIILILLVIYQGLPTNTQVASRIFGVGSKSSGPLYRQLIDIYSYTYDNAVFIFEDLPIDVILTQVDYIDYVGLDRCISHEYEEIFNLVQFPLAGQAIVMTYNIPELANLDTRIVIDRQTLGKIWTGEISKWNHPDIIALNPTLNGTLPDKEIKLGYNDDGNVSISGIVQAALSSFYGNFATEFNNAGQLFANMSFANESRCVNIGPSSRERFDWVKNTTYSLTFVNYADVFNNTNPNISVMNMYNKAGNLVEPSLESVQFAMADFKDEYSNNNFALDVFDAPGNNSWPLSYVNYIVMSKRFFQLDCSRADVVLKFIAWVYTNTAASKALTQNQFYPLDNTLKKVSIDNIYIVKCNNVSVSEQQYLISFGGSTSIVPSWLTAFTSGSIVAKYYSTLSSNSIELLTTHGCDFAVTINGVDQKFYQEIEDLAVMPLAAFSIVPAYNIPEIVGKTLVLDIDVIVKIYLGEITNWNDTKIRNLNPEISNYLPNAIINVVVQNIESDINQIFTKFLSQESEIFSQEIGQTYNPDLSLFNSSVIFVDDIDGLGDELIDNKYSFGFWTDFGVRLLSRVQTVQMASLKINDDIIEPNYDTLKNAISSESNQIARSTNSNVWPITSMISIVYPETTMKNKDKAVAIAEFMYWTQYDPLAINSANNKGYYLASSDPQLRSVVLDLLKNFKFEDESVSSYANCIYQGSICSNFGTCIESACICNSSRTGTYCEKIITDSENNTLIIILATVIPIACIFGLLLLTLLIVIIFLLKHRNTTNNDWEIDFSELEIGETLGTGGYGEVYKSIWKGTEVAVKLISSKHVSKDMERSFFEEVKIMTSLRHPNVVLFMAASTKSPNMCIVMEFMSLGSLYDLLGNELIPEIPYALKIKMAYQASKGMHFLHSSGIVHRDLKSLNLLLDSKWNVKVSDFGLTKVKSELDKKKTNDNIIGTIHWIAPEILNDSTEVDYILADVYSFGIILWELLTREQPYKGMTPAAIAVSVIRDGMRPPISDEAVTAHSIEYIDLIKQCWHSDTIIRPTFLEIMTRLSNILGDSSNMTSGTSSSSLSSGGIGKSITDSKSSNSRSSVESSNTSNTFRGIDRHNSHPTGEVTVAFIDIISASKLWEYDPDGMCESTKMYNEIIRRVTKKYGGYESFISKDRNSGEGSFCLVFSDAIQAINSCEEMQLQLLNANWPKKILQHPAAAEEFDRTDQLIFRGLRVRMALHCGSVKISQDPMTRKYQYSGSTVNITGKITTLTHGGQIIVSENLYQKVNNDFTFITVGKIDIPDYPSKMTLYEIKFEILKNRFFGGITYVNYNDDTDSGTADDSNYDSGKIIDIDYMADIDKEDSFLTSANMCRWIINYDEISIGKQIGLGSYGIVFNGKWKGVDVAVKKFVKQKLSETQLLEFRAEMAFLSELKHSNIVTFIGACIKKPNICIVTEYMRMGNLRDVLKNPDIKITFANKLKLLYGAAMGIDYLHSSNPMIVHRDIKPANILVDEHFNVKIADFGFARIKEDNTTMTRCGTPCWTAPEVIRGEKYCEKADVFSFGVVMWEVLTGKEPFAECNFMKVSLDILEGGRPIIPSDCPHEFAKLIKKCWHAKAHKRPTMTEVVQQLMLITEQFDHKV</sequence>
<evidence type="ECO:0000250" key="1"/>
<evidence type="ECO:0000255" key="2"/>
<evidence type="ECO:0000255" key="3">
    <source>
        <dbReference type="PROSITE-ProRule" id="PRU00099"/>
    </source>
</evidence>
<evidence type="ECO:0000255" key="4">
    <source>
        <dbReference type="PROSITE-ProRule" id="PRU00159"/>
    </source>
</evidence>
<evidence type="ECO:0000256" key="5">
    <source>
        <dbReference type="SAM" id="MobiDB-lite"/>
    </source>
</evidence>
<evidence type="ECO:0000305" key="6"/>
<comment type="catalytic activity">
    <reaction>
        <text>L-seryl-[protein] + ATP = O-phospho-L-seryl-[protein] + ADP + H(+)</text>
        <dbReference type="Rhea" id="RHEA:17989"/>
        <dbReference type="Rhea" id="RHEA-COMP:9863"/>
        <dbReference type="Rhea" id="RHEA-COMP:11604"/>
        <dbReference type="ChEBI" id="CHEBI:15378"/>
        <dbReference type="ChEBI" id="CHEBI:29999"/>
        <dbReference type="ChEBI" id="CHEBI:30616"/>
        <dbReference type="ChEBI" id="CHEBI:83421"/>
        <dbReference type="ChEBI" id="CHEBI:456216"/>
        <dbReference type="EC" id="2.7.11.1"/>
    </reaction>
</comment>
<comment type="catalytic activity">
    <reaction>
        <text>L-threonyl-[protein] + ATP = O-phospho-L-threonyl-[protein] + ADP + H(+)</text>
        <dbReference type="Rhea" id="RHEA:46608"/>
        <dbReference type="Rhea" id="RHEA-COMP:11060"/>
        <dbReference type="Rhea" id="RHEA-COMP:11605"/>
        <dbReference type="ChEBI" id="CHEBI:15378"/>
        <dbReference type="ChEBI" id="CHEBI:30013"/>
        <dbReference type="ChEBI" id="CHEBI:30616"/>
        <dbReference type="ChEBI" id="CHEBI:61977"/>
        <dbReference type="ChEBI" id="CHEBI:456216"/>
        <dbReference type="EC" id="2.7.11.1"/>
    </reaction>
</comment>
<comment type="subcellular location">
    <subcellularLocation>
        <location evidence="6">Membrane</location>
        <topology evidence="6">Single-pass type I membrane protein</topology>
    </subcellularLocation>
</comment>
<organismHost>
    <name type="scientific">Acanthamoeba polyphaga</name>
    <name type="common">Amoeba</name>
    <dbReference type="NCBI Taxonomy" id="5757"/>
</organismHost>
<proteinExistence type="inferred from homology"/>
<protein>
    <recommendedName>
        <fullName>Putative serine/threonine-protein kinase/receptor R831</fullName>
        <ecNumber>2.7.11.1</ecNumber>
    </recommendedName>
</protein>
<accession>Q7T6Y2</accession>
<reference key="1">
    <citation type="journal article" date="2004" name="Science">
        <title>The 1.2-megabase genome sequence of Mimivirus.</title>
        <authorList>
            <person name="Raoult D."/>
            <person name="Audic S."/>
            <person name="Robert C."/>
            <person name="Abergel C."/>
            <person name="Renesto P."/>
            <person name="Ogata H."/>
            <person name="La Scola B."/>
            <person name="Susan M."/>
            <person name="Claverie J.-M."/>
        </authorList>
    </citation>
    <scope>NUCLEOTIDE SEQUENCE [LARGE SCALE GENOMIC DNA]</scope>
    <source>
        <strain>Rowbotham-Bradford</strain>
    </source>
</reference>
<feature type="signal peptide" evidence="2">
    <location>
        <begin position="1"/>
        <end position="25"/>
    </location>
</feature>
<feature type="chain" id="PRO_0000041753" description="Putative serine/threonine-protein kinase/receptor R831">
    <location>
        <begin position="26"/>
        <end position="1624"/>
    </location>
</feature>
<feature type="transmembrane region" description="Helical" evidence="2">
    <location>
        <begin position="747"/>
        <end position="767"/>
    </location>
</feature>
<feature type="domain" description="Protein kinase 1" evidence="4">
    <location>
        <begin position="786"/>
        <end position="1049"/>
    </location>
</feature>
<feature type="domain" description="Guanylate cyclase" evidence="3">
    <location>
        <begin position="1109"/>
        <end position="1252"/>
    </location>
</feature>
<feature type="domain" description="Protein kinase 2" evidence="4">
    <location>
        <begin position="1364"/>
        <end position="1615"/>
    </location>
</feature>
<feature type="region of interest" description="Disordered" evidence="5">
    <location>
        <begin position="1054"/>
        <end position="1101"/>
    </location>
</feature>
<feature type="compositionally biased region" description="Low complexity" evidence="5">
    <location>
        <begin position="1054"/>
        <end position="1093"/>
    </location>
</feature>
<feature type="active site" description="Proton acceptor" evidence="1">
    <location>
        <position position="908"/>
    </location>
</feature>
<feature type="active site" description="Proton acceptor" evidence="1">
    <location>
        <position position="1487"/>
    </location>
</feature>
<feature type="binding site" evidence="4">
    <location>
        <begin position="792"/>
        <end position="800"/>
    </location>
    <ligand>
        <name>ATP</name>
        <dbReference type="ChEBI" id="CHEBI:30616"/>
    </ligand>
</feature>
<feature type="binding site" evidence="4">
    <location>
        <position position="813"/>
    </location>
    <ligand>
        <name>ATP</name>
        <dbReference type="ChEBI" id="CHEBI:30616"/>
    </ligand>
</feature>
<feature type="binding site" evidence="4">
    <location>
        <begin position="1370"/>
        <end position="1378"/>
    </location>
    <ligand>
        <name>ATP</name>
        <dbReference type="ChEBI" id="CHEBI:30616"/>
    </ligand>
</feature>
<feature type="binding site" evidence="4">
    <location>
        <position position="1391"/>
    </location>
    <ligand>
        <name>ATP</name>
        <dbReference type="ChEBI" id="CHEBI:30616"/>
    </ligand>
</feature>
<feature type="glycosylation site" description="N-linked (GlcNAc...) asparagine; by host" evidence="2">
    <location>
        <position position="152"/>
    </location>
</feature>
<feature type="glycosylation site" description="N-linked (GlcNAc...) asparagine; by host" evidence="2">
    <location>
        <position position="169"/>
    </location>
</feature>
<feature type="glycosylation site" description="N-linked (GlcNAc...) asparagine; by host" evidence="2">
    <location>
        <position position="200"/>
    </location>
</feature>
<feature type="glycosylation site" description="N-linked (GlcNAc...) asparagine; by host" evidence="2">
    <location>
        <position position="205"/>
    </location>
</feature>
<feature type="glycosylation site" description="N-linked (GlcNAc...) asparagine; by host" evidence="2">
    <location>
        <position position="225"/>
    </location>
</feature>
<feature type="glycosylation site" description="N-linked (GlcNAc...) asparagine; by host" evidence="2">
    <location>
        <position position="240"/>
    </location>
</feature>
<feature type="glycosylation site" description="N-linked (GlcNAc...) asparagine; by host" evidence="2">
    <location>
        <position position="245"/>
    </location>
</feature>
<feature type="glycosylation site" description="N-linked (GlcNAc...) asparagine; by host" evidence="2">
    <location>
        <position position="292"/>
    </location>
</feature>
<feature type="glycosylation site" description="N-linked (GlcNAc...) asparagine; by host" evidence="2">
    <location>
        <position position="364"/>
    </location>
</feature>
<feature type="glycosylation site" description="N-linked (GlcNAc...) asparagine; by host" evidence="2">
    <location>
        <position position="479"/>
    </location>
</feature>
<feature type="glycosylation site" description="N-linked (GlcNAc...) asparagine; by host" evidence="2">
    <location>
        <position position="541"/>
    </location>
</feature>
<feature type="glycosylation site" description="N-linked (GlcNAc...) asparagine; by host" evidence="2">
    <location>
        <position position="720"/>
    </location>
</feature>
<feature type="glycosylation site" description="N-linked (GlcNAc...) asparagine; by host" evidence="2">
    <location>
        <position position="737"/>
    </location>
</feature>
<keyword id="KW-0067">ATP-binding</keyword>
<keyword id="KW-0325">Glycoprotein</keyword>
<keyword id="KW-0418">Kinase</keyword>
<keyword id="KW-0472">Membrane</keyword>
<keyword id="KW-0547">Nucleotide-binding</keyword>
<keyword id="KW-0675">Receptor</keyword>
<keyword id="KW-1185">Reference proteome</keyword>
<keyword id="KW-0677">Repeat</keyword>
<keyword id="KW-0723">Serine/threonine-protein kinase</keyword>
<keyword id="KW-0732">Signal</keyword>
<keyword id="KW-0808">Transferase</keyword>
<keyword id="KW-0812">Transmembrane</keyword>
<keyword id="KW-1133">Transmembrane helix</keyword>
<organism>
    <name type="scientific">Acanthamoeba polyphaga mimivirus</name>
    <name type="common">APMV</name>
    <dbReference type="NCBI Taxonomy" id="212035"/>
    <lineage>
        <taxon>Viruses</taxon>
        <taxon>Varidnaviria</taxon>
        <taxon>Bamfordvirae</taxon>
        <taxon>Nucleocytoviricota</taxon>
        <taxon>Megaviricetes</taxon>
        <taxon>Imitervirales</taxon>
        <taxon>Mimiviridae</taxon>
        <taxon>Megamimivirinae</taxon>
        <taxon>Mimivirus</taxon>
        <taxon>Mimivirus bradfordmassiliense</taxon>
    </lineage>
</organism>
<name>YR831_MIMIV</name>
<dbReference type="EC" id="2.7.11.1"/>
<dbReference type="EMBL" id="AY653733">
    <property type="protein sequence ID" value="AAQ09578.2"/>
    <property type="molecule type" value="Genomic_DNA"/>
</dbReference>
<dbReference type="SMR" id="Q7T6Y2"/>
<dbReference type="KEGG" id="vg:9925495"/>
<dbReference type="Proteomes" id="UP000001134">
    <property type="component" value="Genome"/>
</dbReference>
<dbReference type="GO" id="GO:0016020">
    <property type="term" value="C:membrane"/>
    <property type="evidence" value="ECO:0007669"/>
    <property type="project" value="UniProtKB-SubCell"/>
</dbReference>
<dbReference type="GO" id="GO:0005524">
    <property type="term" value="F:ATP binding"/>
    <property type="evidence" value="ECO:0007669"/>
    <property type="project" value="UniProtKB-KW"/>
</dbReference>
<dbReference type="GO" id="GO:0106310">
    <property type="term" value="F:protein serine kinase activity"/>
    <property type="evidence" value="ECO:0007669"/>
    <property type="project" value="RHEA"/>
</dbReference>
<dbReference type="GO" id="GO:0004674">
    <property type="term" value="F:protein serine/threonine kinase activity"/>
    <property type="evidence" value="ECO:0007669"/>
    <property type="project" value="UniProtKB-KW"/>
</dbReference>
<dbReference type="GO" id="GO:0009190">
    <property type="term" value="P:cyclic nucleotide biosynthetic process"/>
    <property type="evidence" value="ECO:0007669"/>
    <property type="project" value="InterPro"/>
</dbReference>
<dbReference type="GO" id="GO:0035556">
    <property type="term" value="P:intracellular signal transduction"/>
    <property type="evidence" value="ECO:0007669"/>
    <property type="project" value="InterPro"/>
</dbReference>
<dbReference type="CDD" id="cd07302">
    <property type="entry name" value="CHD"/>
    <property type="match status" value="1"/>
</dbReference>
<dbReference type="CDD" id="cd13999">
    <property type="entry name" value="STKc_MAP3K-like"/>
    <property type="match status" value="2"/>
</dbReference>
<dbReference type="FunFam" id="3.30.200.20:FF:000060">
    <property type="entry name" value="Serine/threonine-protein kinase isoform 1"/>
    <property type="match status" value="2"/>
</dbReference>
<dbReference type="Gene3D" id="3.30.70.1230">
    <property type="entry name" value="Nucleotide cyclase"/>
    <property type="match status" value="1"/>
</dbReference>
<dbReference type="Gene3D" id="3.40.190.10">
    <property type="entry name" value="Periplasmic binding protein-like II"/>
    <property type="match status" value="4"/>
</dbReference>
<dbReference type="Gene3D" id="3.30.200.20">
    <property type="entry name" value="Phosphorylase Kinase, domain 1"/>
    <property type="match status" value="2"/>
</dbReference>
<dbReference type="Gene3D" id="1.10.510.10">
    <property type="entry name" value="Transferase(Phosphotransferase) domain 1"/>
    <property type="match status" value="2"/>
</dbReference>
<dbReference type="InterPro" id="IPR001054">
    <property type="entry name" value="A/G_cyclase"/>
</dbReference>
<dbReference type="InterPro" id="IPR011009">
    <property type="entry name" value="Kinase-like_dom_sf"/>
</dbReference>
<dbReference type="InterPro" id="IPR029787">
    <property type="entry name" value="Nucleotide_cyclase"/>
</dbReference>
<dbReference type="InterPro" id="IPR000719">
    <property type="entry name" value="Prot_kinase_dom"/>
</dbReference>
<dbReference type="InterPro" id="IPR017441">
    <property type="entry name" value="Protein_kinase_ATP_BS"/>
</dbReference>
<dbReference type="InterPro" id="IPR001245">
    <property type="entry name" value="Ser-Thr/Tyr_kinase_cat_dom"/>
</dbReference>
<dbReference type="InterPro" id="IPR008271">
    <property type="entry name" value="Ser/Thr_kinase_AS"/>
</dbReference>
<dbReference type="InterPro" id="IPR051681">
    <property type="entry name" value="Ser/Thr_Kinases-Pseudokinases"/>
</dbReference>
<dbReference type="PANTHER" id="PTHR44329:SF298">
    <property type="entry name" value="MIXED LINEAGE KINASE DOMAIN-LIKE PROTEIN"/>
    <property type="match status" value="1"/>
</dbReference>
<dbReference type="PANTHER" id="PTHR44329">
    <property type="entry name" value="SERINE/THREONINE-PROTEIN KINASE TNNI3K-RELATED"/>
    <property type="match status" value="1"/>
</dbReference>
<dbReference type="Pfam" id="PF00211">
    <property type="entry name" value="Guanylate_cyc"/>
    <property type="match status" value="1"/>
</dbReference>
<dbReference type="Pfam" id="PF07714">
    <property type="entry name" value="PK_Tyr_Ser-Thr"/>
    <property type="match status" value="2"/>
</dbReference>
<dbReference type="PRINTS" id="PR00109">
    <property type="entry name" value="TYRKINASE"/>
</dbReference>
<dbReference type="SMART" id="SM00044">
    <property type="entry name" value="CYCc"/>
    <property type="match status" value="1"/>
</dbReference>
<dbReference type="SMART" id="SM00220">
    <property type="entry name" value="S_TKc"/>
    <property type="match status" value="2"/>
</dbReference>
<dbReference type="SUPFAM" id="SSF55073">
    <property type="entry name" value="Nucleotide cyclase"/>
    <property type="match status" value="1"/>
</dbReference>
<dbReference type="SUPFAM" id="SSF53850">
    <property type="entry name" value="Periplasmic binding protein-like II"/>
    <property type="match status" value="2"/>
</dbReference>
<dbReference type="SUPFAM" id="SSF56112">
    <property type="entry name" value="Protein kinase-like (PK-like)"/>
    <property type="match status" value="2"/>
</dbReference>
<dbReference type="PROSITE" id="PS50125">
    <property type="entry name" value="GUANYLATE_CYCLASE_2"/>
    <property type="match status" value="1"/>
</dbReference>
<dbReference type="PROSITE" id="PS00107">
    <property type="entry name" value="PROTEIN_KINASE_ATP"/>
    <property type="match status" value="2"/>
</dbReference>
<dbReference type="PROSITE" id="PS50011">
    <property type="entry name" value="PROTEIN_KINASE_DOM"/>
    <property type="match status" value="2"/>
</dbReference>
<dbReference type="PROSITE" id="PS00108">
    <property type="entry name" value="PROTEIN_KINASE_ST"/>
    <property type="match status" value="2"/>
</dbReference>